<reference key="1">
    <citation type="journal article" date="2002" name="J. Mol. Microbiol. Biotechnol.">
        <title>The genome of Methanosarcina mazei: evidence for lateral gene transfer between Bacteria and Archaea.</title>
        <authorList>
            <person name="Deppenmeier U."/>
            <person name="Johann A."/>
            <person name="Hartsch T."/>
            <person name="Merkl R."/>
            <person name="Schmitz R.A."/>
            <person name="Martinez-Arias R."/>
            <person name="Henne A."/>
            <person name="Wiezer A."/>
            <person name="Baeumer S."/>
            <person name="Jacobi C."/>
            <person name="Brueggemann H."/>
            <person name="Lienard T."/>
            <person name="Christmann A."/>
            <person name="Boemecke M."/>
            <person name="Steckel S."/>
            <person name="Bhattacharyya A."/>
            <person name="Lykidis A."/>
            <person name="Overbeek R."/>
            <person name="Klenk H.-P."/>
            <person name="Gunsalus R.P."/>
            <person name="Fritz H.-J."/>
            <person name="Gottschalk G."/>
        </authorList>
    </citation>
    <scope>NUCLEOTIDE SEQUENCE [LARGE SCALE GENOMIC DNA]</scope>
    <source>
        <strain>ATCC BAA-159 / DSM 3647 / Goe1 / Go1 / JCM 11833 / OCM 88</strain>
    </source>
</reference>
<name>ASPD_METMA</name>
<protein>
    <recommendedName>
        <fullName evidence="1">L-aspartate dehydrogenase</fullName>
        <ecNumber evidence="1">1.4.1.21</ecNumber>
    </recommendedName>
</protein>
<evidence type="ECO:0000255" key="1">
    <source>
        <dbReference type="HAMAP-Rule" id="MF_01265"/>
    </source>
</evidence>
<evidence type="ECO:0000305" key="2"/>
<proteinExistence type="inferred from homology"/>
<dbReference type="EC" id="1.4.1.21" evidence="1"/>
<dbReference type="EMBL" id="AE008384">
    <property type="protein sequence ID" value="AAM31768.1"/>
    <property type="status" value="ALT_INIT"/>
    <property type="molecule type" value="Genomic_DNA"/>
</dbReference>
<dbReference type="RefSeq" id="WP_080503054.1">
    <property type="nucleotide sequence ID" value="NC_003901.1"/>
</dbReference>
<dbReference type="SMR" id="Q8PV99"/>
<dbReference type="GeneID" id="1480414"/>
<dbReference type="KEGG" id="mma:MM_2072"/>
<dbReference type="PATRIC" id="fig|192952.21.peg.2378"/>
<dbReference type="eggNOG" id="arCOG00254">
    <property type="taxonomic scope" value="Archaea"/>
</dbReference>
<dbReference type="HOGENOM" id="CLU_089550_0_0_2"/>
<dbReference type="UniPathway" id="UPA00253">
    <property type="reaction ID" value="UER00456"/>
</dbReference>
<dbReference type="Proteomes" id="UP000000595">
    <property type="component" value="Chromosome"/>
</dbReference>
<dbReference type="GO" id="GO:0033735">
    <property type="term" value="F:aspartate dehydrogenase activity"/>
    <property type="evidence" value="ECO:0007669"/>
    <property type="project" value="UniProtKB-EC"/>
</dbReference>
<dbReference type="GO" id="GO:0051287">
    <property type="term" value="F:NAD binding"/>
    <property type="evidence" value="ECO:0007669"/>
    <property type="project" value="UniProtKB-UniRule"/>
</dbReference>
<dbReference type="GO" id="GO:0050661">
    <property type="term" value="F:NADP binding"/>
    <property type="evidence" value="ECO:0007669"/>
    <property type="project" value="UniProtKB-UniRule"/>
</dbReference>
<dbReference type="GO" id="GO:0016639">
    <property type="term" value="F:oxidoreductase activity, acting on the CH-NH2 group of donors, NAD or NADP as acceptor"/>
    <property type="evidence" value="ECO:0007669"/>
    <property type="project" value="UniProtKB-UniRule"/>
</dbReference>
<dbReference type="GO" id="GO:0009435">
    <property type="term" value="P:NAD biosynthetic process"/>
    <property type="evidence" value="ECO:0007669"/>
    <property type="project" value="UniProtKB-UniRule"/>
</dbReference>
<dbReference type="Gene3D" id="3.30.360.10">
    <property type="entry name" value="Dihydrodipicolinate Reductase, domain 2"/>
    <property type="match status" value="1"/>
</dbReference>
<dbReference type="Gene3D" id="3.40.50.720">
    <property type="entry name" value="NAD(P)-binding Rossmann-like Domain"/>
    <property type="match status" value="1"/>
</dbReference>
<dbReference type="HAMAP" id="MF_01265">
    <property type="entry name" value="NadX"/>
    <property type="match status" value="1"/>
</dbReference>
<dbReference type="InterPro" id="IPR005106">
    <property type="entry name" value="Asp/hSer_DH_NAD-bd"/>
</dbReference>
<dbReference type="InterPro" id="IPR002811">
    <property type="entry name" value="Asp_DH"/>
</dbReference>
<dbReference type="InterPro" id="IPR022487">
    <property type="entry name" value="Asp_DH_arc"/>
</dbReference>
<dbReference type="InterPro" id="IPR020626">
    <property type="entry name" value="Asp_DH_prok"/>
</dbReference>
<dbReference type="InterPro" id="IPR011182">
    <property type="entry name" value="L-Asp_DH"/>
</dbReference>
<dbReference type="InterPro" id="IPR036291">
    <property type="entry name" value="NAD(P)-bd_dom_sf"/>
</dbReference>
<dbReference type="NCBIfam" id="TIGR03855">
    <property type="entry name" value="NAD_NadX"/>
    <property type="match status" value="1"/>
</dbReference>
<dbReference type="NCBIfam" id="NF009828">
    <property type="entry name" value="PRK13303.1-3"/>
    <property type="match status" value="1"/>
</dbReference>
<dbReference type="NCBIfam" id="NF009829">
    <property type="entry name" value="PRK13303.1-4"/>
    <property type="match status" value="1"/>
</dbReference>
<dbReference type="NCBIfam" id="NF009830">
    <property type="entry name" value="PRK13304.1"/>
    <property type="match status" value="1"/>
</dbReference>
<dbReference type="PANTHER" id="PTHR31873:SF6">
    <property type="entry name" value="ASPARTATE DEHYDROGENASE DOMAIN-CONTAINING PROTEIN"/>
    <property type="match status" value="1"/>
</dbReference>
<dbReference type="PANTHER" id="PTHR31873">
    <property type="entry name" value="L-ASPARTATE DEHYDROGENASE-RELATED"/>
    <property type="match status" value="1"/>
</dbReference>
<dbReference type="Pfam" id="PF01958">
    <property type="entry name" value="Asp_DH_C"/>
    <property type="match status" value="1"/>
</dbReference>
<dbReference type="Pfam" id="PF03447">
    <property type="entry name" value="NAD_binding_3"/>
    <property type="match status" value="1"/>
</dbReference>
<dbReference type="PIRSF" id="PIRSF005227">
    <property type="entry name" value="Asp_dh_NAD_syn"/>
    <property type="match status" value="1"/>
</dbReference>
<dbReference type="SUPFAM" id="SSF55347">
    <property type="entry name" value="Glyceraldehyde-3-phosphate dehydrogenase-like, C-terminal domain"/>
    <property type="match status" value="1"/>
</dbReference>
<dbReference type="SUPFAM" id="SSF51735">
    <property type="entry name" value="NAD(P)-binding Rossmann-fold domains"/>
    <property type="match status" value="1"/>
</dbReference>
<sequence length="271" mass="28615">MLKIGIIGCGFIGGQICRAIDSGEIDAELYALCDSSESKAFGLAKSLNTCKPAYMKIEELISSVDLVVESASQNAVRFIVPQALKAGCSVMVLSVGALADKELRETLFGLAKKHNCKLYFPSGAVVGIDGINSAHAAGISSVTLTTRKPPSGLMGAPYVVEHGIELEKLEKETILFEGTASEAVKAFPANVNVAATISLAGIGFERTMVRVIADPSLSRNIHEINVEGEFGKFCTKVENLPSPENPKTSYLAALSAISTLKKILNPVQIGT</sequence>
<feature type="chain" id="PRO_0000144898" description="L-aspartate dehydrogenase">
    <location>
        <begin position="1"/>
        <end position="271"/>
    </location>
</feature>
<feature type="active site" evidence="1">
    <location>
        <position position="222"/>
    </location>
</feature>
<feature type="binding site" evidence="1">
    <location>
        <position position="124"/>
    </location>
    <ligand>
        <name>NAD(+)</name>
        <dbReference type="ChEBI" id="CHEBI:57540"/>
    </ligand>
</feature>
<feature type="binding site" evidence="1">
    <location>
        <position position="192"/>
    </location>
    <ligand>
        <name>NAD(+)</name>
        <dbReference type="ChEBI" id="CHEBI:57540"/>
    </ligand>
</feature>
<comment type="function">
    <text evidence="1">Specifically catalyzes the NAD or NADP-dependent dehydrogenation of L-aspartate to iminoaspartate.</text>
</comment>
<comment type="catalytic activity">
    <reaction evidence="1">
        <text>L-aspartate + NADP(+) + H2O = oxaloacetate + NH4(+) + NADPH + H(+)</text>
        <dbReference type="Rhea" id="RHEA:11784"/>
        <dbReference type="ChEBI" id="CHEBI:15377"/>
        <dbReference type="ChEBI" id="CHEBI:15378"/>
        <dbReference type="ChEBI" id="CHEBI:16452"/>
        <dbReference type="ChEBI" id="CHEBI:28938"/>
        <dbReference type="ChEBI" id="CHEBI:29991"/>
        <dbReference type="ChEBI" id="CHEBI:57783"/>
        <dbReference type="ChEBI" id="CHEBI:58349"/>
        <dbReference type="EC" id="1.4.1.21"/>
    </reaction>
</comment>
<comment type="catalytic activity">
    <reaction evidence="1">
        <text>L-aspartate + NAD(+) + H2O = oxaloacetate + NH4(+) + NADH + H(+)</text>
        <dbReference type="Rhea" id="RHEA:11788"/>
        <dbReference type="ChEBI" id="CHEBI:15377"/>
        <dbReference type="ChEBI" id="CHEBI:15378"/>
        <dbReference type="ChEBI" id="CHEBI:16452"/>
        <dbReference type="ChEBI" id="CHEBI:28938"/>
        <dbReference type="ChEBI" id="CHEBI:29991"/>
        <dbReference type="ChEBI" id="CHEBI:57540"/>
        <dbReference type="ChEBI" id="CHEBI:57945"/>
        <dbReference type="EC" id="1.4.1.21"/>
    </reaction>
</comment>
<comment type="pathway">
    <text evidence="1">Cofactor biosynthesis; NAD(+) biosynthesis; iminoaspartate from L-aspartate (dehydrogenase route): step 1/1.</text>
</comment>
<comment type="miscellaneous">
    <text evidence="1">The iminoaspartate product is unstable in aqueous solution and can decompose to oxaloacetate and ammonia.</text>
</comment>
<comment type="similarity">
    <text evidence="1">Belongs to the L-aspartate dehydrogenase family.</text>
</comment>
<comment type="sequence caution" evidence="2">
    <conflict type="erroneous initiation">
        <sequence resource="EMBL-CDS" id="AAM31768"/>
    </conflict>
</comment>
<keyword id="KW-0520">NAD</keyword>
<keyword id="KW-0521">NADP</keyword>
<keyword id="KW-0560">Oxidoreductase</keyword>
<keyword id="KW-0662">Pyridine nucleotide biosynthesis</keyword>
<organism>
    <name type="scientific">Methanosarcina mazei (strain ATCC BAA-159 / DSM 3647 / Goe1 / Go1 / JCM 11833 / OCM 88)</name>
    <name type="common">Methanosarcina frisia</name>
    <dbReference type="NCBI Taxonomy" id="192952"/>
    <lineage>
        <taxon>Archaea</taxon>
        <taxon>Methanobacteriati</taxon>
        <taxon>Methanobacteriota</taxon>
        <taxon>Stenosarchaea group</taxon>
        <taxon>Methanomicrobia</taxon>
        <taxon>Methanosarcinales</taxon>
        <taxon>Methanosarcinaceae</taxon>
        <taxon>Methanosarcina</taxon>
    </lineage>
</organism>
<accession>Q8PV99</accession>
<gene>
    <name evidence="1" type="primary">nadX</name>
    <name type="ordered locus">MM_2072</name>
</gene>